<accession>B9LIY4</accession>
<name>ACPS_CHLSY</name>
<sequence length="137" mass="14528">MLYHGVDLVEVARIRHAVVRYGQRFVQRVYTATEQADCLAGSGDVRYEALAARWAAKEACAKALGIGLRGLGALAVADRPRAGFHEIEVVRDNDGRPVLRLSGFAAEQAAALGICALAVSLSHTDELALASVVAWAG</sequence>
<protein>
    <recommendedName>
        <fullName evidence="1">Holo-[acyl-carrier-protein] synthase</fullName>
        <shortName evidence="1">Holo-ACP synthase</shortName>
        <ecNumber evidence="1">2.7.8.7</ecNumber>
    </recommendedName>
    <alternativeName>
        <fullName evidence="1">4'-phosphopantetheinyl transferase AcpS</fullName>
    </alternativeName>
</protein>
<organism>
    <name type="scientific">Chloroflexus aurantiacus (strain ATCC 29364 / DSM 637 / Y-400-fl)</name>
    <dbReference type="NCBI Taxonomy" id="480224"/>
    <lineage>
        <taxon>Bacteria</taxon>
        <taxon>Bacillati</taxon>
        <taxon>Chloroflexota</taxon>
        <taxon>Chloroflexia</taxon>
        <taxon>Chloroflexales</taxon>
        <taxon>Chloroflexineae</taxon>
        <taxon>Chloroflexaceae</taxon>
        <taxon>Chloroflexus</taxon>
    </lineage>
</organism>
<dbReference type="EC" id="2.7.8.7" evidence="1"/>
<dbReference type="EMBL" id="CP001364">
    <property type="protein sequence ID" value="ACM51946.1"/>
    <property type="molecule type" value="Genomic_DNA"/>
</dbReference>
<dbReference type="SMR" id="B9LIY4"/>
<dbReference type="KEGG" id="chl:Chy400_0509"/>
<dbReference type="HOGENOM" id="CLU_089696_0_2_0"/>
<dbReference type="OrthoDB" id="517356at2"/>
<dbReference type="GO" id="GO:0005737">
    <property type="term" value="C:cytoplasm"/>
    <property type="evidence" value="ECO:0007669"/>
    <property type="project" value="UniProtKB-SubCell"/>
</dbReference>
<dbReference type="GO" id="GO:0008897">
    <property type="term" value="F:holo-[acyl-carrier-protein] synthase activity"/>
    <property type="evidence" value="ECO:0007669"/>
    <property type="project" value="UniProtKB-UniRule"/>
</dbReference>
<dbReference type="GO" id="GO:0000287">
    <property type="term" value="F:magnesium ion binding"/>
    <property type="evidence" value="ECO:0007669"/>
    <property type="project" value="UniProtKB-UniRule"/>
</dbReference>
<dbReference type="GO" id="GO:0006633">
    <property type="term" value="P:fatty acid biosynthetic process"/>
    <property type="evidence" value="ECO:0007669"/>
    <property type="project" value="UniProtKB-UniRule"/>
</dbReference>
<dbReference type="Gene3D" id="3.90.470.20">
    <property type="entry name" value="4'-phosphopantetheinyl transferase domain"/>
    <property type="match status" value="1"/>
</dbReference>
<dbReference type="HAMAP" id="MF_00101">
    <property type="entry name" value="AcpS"/>
    <property type="match status" value="1"/>
</dbReference>
<dbReference type="InterPro" id="IPR008278">
    <property type="entry name" value="4-PPantetheinyl_Trfase_dom"/>
</dbReference>
<dbReference type="InterPro" id="IPR037143">
    <property type="entry name" value="4-PPantetheinyl_Trfase_dom_sf"/>
</dbReference>
<dbReference type="InterPro" id="IPR002582">
    <property type="entry name" value="ACPS"/>
</dbReference>
<dbReference type="InterPro" id="IPR004568">
    <property type="entry name" value="Ppantetheine-prot_Trfase_dom"/>
</dbReference>
<dbReference type="NCBIfam" id="TIGR00516">
    <property type="entry name" value="acpS"/>
    <property type="match status" value="1"/>
</dbReference>
<dbReference type="NCBIfam" id="TIGR00556">
    <property type="entry name" value="pantethn_trn"/>
    <property type="match status" value="1"/>
</dbReference>
<dbReference type="Pfam" id="PF01648">
    <property type="entry name" value="ACPS"/>
    <property type="match status" value="1"/>
</dbReference>
<dbReference type="SUPFAM" id="SSF56214">
    <property type="entry name" value="4'-phosphopantetheinyl transferase"/>
    <property type="match status" value="1"/>
</dbReference>
<reference key="1">
    <citation type="submission" date="2009-01" db="EMBL/GenBank/DDBJ databases">
        <title>Complete sequence of Chloroflexus sp. Y-400-fl.</title>
        <authorList>
            <consortium name="US DOE Joint Genome Institute"/>
            <person name="Lucas S."/>
            <person name="Copeland A."/>
            <person name="Lapidus A."/>
            <person name="Glavina del Rio T."/>
            <person name="Dalin E."/>
            <person name="Tice H."/>
            <person name="Bruce D."/>
            <person name="Goodwin L."/>
            <person name="Pitluck S."/>
            <person name="Sims D."/>
            <person name="Kiss H."/>
            <person name="Brettin T."/>
            <person name="Detter J.C."/>
            <person name="Han C."/>
            <person name="Larimer F."/>
            <person name="Land M."/>
            <person name="Hauser L."/>
            <person name="Kyrpides N."/>
            <person name="Ovchinnikova G."/>
            <person name="Bryant D.A."/>
            <person name="Richardson P."/>
        </authorList>
    </citation>
    <scope>NUCLEOTIDE SEQUENCE [LARGE SCALE GENOMIC DNA]</scope>
    <source>
        <strain>ATCC 29364 / DSM 637 / Y-400-fl</strain>
    </source>
</reference>
<keyword id="KW-0963">Cytoplasm</keyword>
<keyword id="KW-0275">Fatty acid biosynthesis</keyword>
<keyword id="KW-0276">Fatty acid metabolism</keyword>
<keyword id="KW-0444">Lipid biosynthesis</keyword>
<keyword id="KW-0443">Lipid metabolism</keyword>
<keyword id="KW-0460">Magnesium</keyword>
<keyword id="KW-0479">Metal-binding</keyword>
<keyword id="KW-0808">Transferase</keyword>
<feature type="chain" id="PRO_1000118803" description="Holo-[acyl-carrier-protein] synthase">
    <location>
        <begin position="1"/>
        <end position="137"/>
    </location>
</feature>
<feature type="binding site" evidence="1">
    <location>
        <position position="7"/>
    </location>
    <ligand>
        <name>Mg(2+)</name>
        <dbReference type="ChEBI" id="CHEBI:18420"/>
    </ligand>
</feature>
<feature type="binding site" evidence="1">
    <location>
        <position position="58"/>
    </location>
    <ligand>
        <name>Mg(2+)</name>
        <dbReference type="ChEBI" id="CHEBI:18420"/>
    </ligand>
</feature>
<comment type="function">
    <text evidence="1">Transfers the 4'-phosphopantetheine moiety from coenzyme A to a Ser of acyl-carrier-protein.</text>
</comment>
<comment type="catalytic activity">
    <reaction evidence="1">
        <text>apo-[ACP] + CoA = holo-[ACP] + adenosine 3',5'-bisphosphate + H(+)</text>
        <dbReference type="Rhea" id="RHEA:12068"/>
        <dbReference type="Rhea" id="RHEA-COMP:9685"/>
        <dbReference type="Rhea" id="RHEA-COMP:9690"/>
        <dbReference type="ChEBI" id="CHEBI:15378"/>
        <dbReference type="ChEBI" id="CHEBI:29999"/>
        <dbReference type="ChEBI" id="CHEBI:57287"/>
        <dbReference type="ChEBI" id="CHEBI:58343"/>
        <dbReference type="ChEBI" id="CHEBI:64479"/>
        <dbReference type="EC" id="2.7.8.7"/>
    </reaction>
</comment>
<comment type="cofactor">
    <cofactor evidence="1">
        <name>Mg(2+)</name>
        <dbReference type="ChEBI" id="CHEBI:18420"/>
    </cofactor>
</comment>
<comment type="subcellular location">
    <subcellularLocation>
        <location evidence="1">Cytoplasm</location>
    </subcellularLocation>
</comment>
<comment type="similarity">
    <text evidence="1">Belongs to the P-Pant transferase superfamily. AcpS family.</text>
</comment>
<evidence type="ECO:0000255" key="1">
    <source>
        <dbReference type="HAMAP-Rule" id="MF_00101"/>
    </source>
</evidence>
<gene>
    <name evidence="1" type="primary">acpS</name>
    <name type="ordered locus">Chy400_0509</name>
</gene>
<proteinExistence type="inferred from homology"/>